<protein>
    <recommendedName>
        <fullName evidence="1">Protein Smg homolog</fullName>
    </recommendedName>
</protein>
<gene>
    <name evidence="1" type="primary">smg</name>
    <name type="ordered locus">VCM66_0049</name>
</gene>
<organism>
    <name type="scientific">Vibrio cholerae serotype O1 (strain M66-2)</name>
    <dbReference type="NCBI Taxonomy" id="579112"/>
    <lineage>
        <taxon>Bacteria</taxon>
        <taxon>Pseudomonadati</taxon>
        <taxon>Pseudomonadota</taxon>
        <taxon>Gammaproteobacteria</taxon>
        <taxon>Vibrionales</taxon>
        <taxon>Vibrionaceae</taxon>
        <taxon>Vibrio</taxon>
    </lineage>
</organism>
<sequence length="158" mass="18468">MMMDILMYLFETYVHSDADLQVDQDQLEDELLRAGFHQKDIYKALHWLEELAALQQTDAQTAIAKSAPTSMRIYAPEEIERLDLESRGFLLFLEHINVLTPETREMVIDRVMGLETDEFELDDLKWIILMVLFNVPGNENAYTVMEELLYSKEQGILH</sequence>
<accession>C3LPC2</accession>
<evidence type="ECO:0000255" key="1">
    <source>
        <dbReference type="HAMAP-Rule" id="MF_00598"/>
    </source>
</evidence>
<dbReference type="EMBL" id="CP001233">
    <property type="protein sequence ID" value="ACP04386.1"/>
    <property type="molecule type" value="Genomic_DNA"/>
</dbReference>
<dbReference type="RefSeq" id="WP_000979769.1">
    <property type="nucleotide sequence ID" value="NC_012578.1"/>
</dbReference>
<dbReference type="SMR" id="C3LPC2"/>
<dbReference type="KEGG" id="vcm:VCM66_0049"/>
<dbReference type="HOGENOM" id="CLU_133242_0_0_6"/>
<dbReference type="Proteomes" id="UP000001217">
    <property type="component" value="Chromosome I"/>
</dbReference>
<dbReference type="HAMAP" id="MF_00598">
    <property type="entry name" value="Smg"/>
    <property type="match status" value="1"/>
</dbReference>
<dbReference type="InterPro" id="IPR007456">
    <property type="entry name" value="Smg"/>
</dbReference>
<dbReference type="NCBIfam" id="NF002897">
    <property type="entry name" value="PRK03430.1"/>
    <property type="match status" value="1"/>
</dbReference>
<dbReference type="PANTHER" id="PTHR38692">
    <property type="entry name" value="PROTEIN SMG"/>
    <property type="match status" value="1"/>
</dbReference>
<dbReference type="PANTHER" id="PTHR38692:SF1">
    <property type="entry name" value="PROTEIN SMG"/>
    <property type="match status" value="1"/>
</dbReference>
<dbReference type="Pfam" id="PF04361">
    <property type="entry name" value="DUF494"/>
    <property type="match status" value="1"/>
</dbReference>
<proteinExistence type="inferred from homology"/>
<reference key="1">
    <citation type="journal article" date="2008" name="PLoS ONE">
        <title>A recalibrated molecular clock and independent origins for the cholera pandemic clones.</title>
        <authorList>
            <person name="Feng L."/>
            <person name="Reeves P.R."/>
            <person name="Lan R."/>
            <person name="Ren Y."/>
            <person name="Gao C."/>
            <person name="Zhou Z."/>
            <person name="Ren Y."/>
            <person name="Cheng J."/>
            <person name="Wang W."/>
            <person name="Wang J."/>
            <person name="Qian W."/>
            <person name="Li D."/>
            <person name="Wang L."/>
        </authorList>
    </citation>
    <scope>NUCLEOTIDE SEQUENCE [LARGE SCALE GENOMIC DNA]</scope>
    <source>
        <strain>M66-2</strain>
    </source>
</reference>
<name>SMG_VIBCM</name>
<comment type="similarity">
    <text evidence="1">Belongs to the Smg family.</text>
</comment>
<feature type="chain" id="PRO_1000147001" description="Protein Smg homolog">
    <location>
        <begin position="1"/>
        <end position="158"/>
    </location>
</feature>